<comment type="function">
    <text evidence="1">Involved in the import of nuclear-targeted proteins into the nucleus and the export of poly(A) RNA out of the nucleus. Has a role in the endoplasmic reticulum-associated degradation (ERAD) pathway (By similarity).</text>
</comment>
<comment type="subcellular location">
    <subcellularLocation>
        <location evidence="1">Cytoplasm</location>
        <location evidence="1">Perinuclear region</location>
    </subcellularLocation>
    <subcellularLocation>
        <location evidence="1">Endoplasmic reticulum membrane</location>
        <topology evidence="1">Peripheral membrane protein</topology>
        <orientation evidence="1">Cytoplasmic side</orientation>
    </subcellularLocation>
    <subcellularLocation>
        <location evidence="1">Nucleus membrane</location>
        <topology evidence="1">Peripheral membrane protein</topology>
        <orientation evidence="1">Cytoplasmic side</orientation>
    </subcellularLocation>
    <text evidence="1">Localizes mainly at the nuclear periphery and the endoplasmic reticulum membrane.</text>
</comment>
<comment type="similarity">
    <text evidence="3">Belongs to the NPL4 family.</text>
</comment>
<gene>
    <name type="primary">NPL4</name>
    <name type="ordered locus">AGR211W</name>
</gene>
<dbReference type="EMBL" id="AE016820">
    <property type="protein sequence ID" value="AAS54701.1"/>
    <property type="molecule type" value="Genomic_DNA"/>
</dbReference>
<dbReference type="RefSeq" id="NP_986877.1">
    <property type="nucleotide sequence ID" value="NM_211939.1"/>
</dbReference>
<dbReference type="SMR" id="Q74ZJ1"/>
<dbReference type="FunCoup" id="Q74ZJ1">
    <property type="interactions" value="990"/>
</dbReference>
<dbReference type="STRING" id="284811.Q74ZJ1"/>
<dbReference type="EnsemblFungi" id="AAS54701">
    <property type="protein sequence ID" value="AAS54701"/>
    <property type="gene ID" value="AGOS_AGR211W"/>
</dbReference>
<dbReference type="GeneID" id="4623179"/>
<dbReference type="KEGG" id="ago:AGOS_AGR211W"/>
<dbReference type="eggNOG" id="KOG2834">
    <property type="taxonomic scope" value="Eukaryota"/>
</dbReference>
<dbReference type="HOGENOM" id="CLU_017172_0_0_1"/>
<dbReference type="InParanoid" id="Q74ZJ1"/>
<dbReference type="OMA" id="KWSRTGR"/>
<dbReference type="OrthoDB" id="10251089at2759"/>
<dbReference type="Proteomes" id="UP000000591">
    <property type="component" value="Chromosome VII"/>
</dbReference>
<dbReference type="GO" id="GO:0005789">
    <property type="term" value="C:endoplasmic reticulum membrane"/>
    <property type="evidence" value="ECO:0007669"/>
    <property type="project" value="UniProtKB-SubCell"/>
</dbReference>
<dbReference type="GO" id="GO:0031965">
    <property type="term" value="C:nuclear membrane"/>
    <property type="evidence" value="ECO:0007669"/>
    <property type="project" value="UniProtKB-SubCell"/>
</dbReference>
<dbReference type="GO" id="GO:0005634">
    <property type="term" value="C:nucleus"/>
    <property type="evidence" value="ECO:0000318"/>
    <property type="project" value="GO_Central"/>
</dbReference>
<dbReference type="GO" id="GO:0048471">
    <property type="term" value="C:perinuclear region of cytoplasm"/>
    <property type="evidence" value="ECO:0007669"/>
    <property type="project" value="UniProtKB-SubCell"/>
</dbReference>
<dbReference type="GO" id="GO:0043130">
    <property type="term" value="F:ubiquitin binding"/>
    <property type="evidence" value="ECO:0000318"/>
    <property type="project" value="GO_Central"/>
</dbReference>
<dbReference type="GO" id="GO:0031625">
    <property type="term" value="F:ubiquitin protein ligase binding"/>
    <property type="evidence" value="ECO:0000318"/>
    <property type="project" value="GO_Central"/>
</dbReference>
<dbReference type="GO" id="GO:0051028">
    <property type="term" value="P:mRNA transport"/>
    <property type="evidence" value="ECO:0007669"/>
    <property type="project" value="UniProtKB-KW"/>
</dbReference>
<dbReference type="GO" id="GO:0015031">
    <property type="term" value="P:protein transport"/>
    <property type="evidence" value="ECO:0007669"/>
    <property type="project" value="UniProtKB-KW"/>
</dbReference>
<dbReference type="GO" id="GO:0006511">
    <property type="term" value="P:ubiquitin-dependent protein catabolic process"/>
    <property type="evidence" value="ECO:0000318"/>
    <property type="project" value="GO_Central"/>
</dbReference>
<dbReference type="CDD" id="cd08061">
    <property type="entry name" value="MPN_NPL4"/>
    <property type="match status" value="1"/>
</dbReference>
<dbReference type="Gene3D" id="3.10.20.90">
    <property type="entry name" value="Phosphatidylinositol 3-kinase Catalytic Subunit, Chain A, domain 1"/>
    <property type="match status" value="1"/>
</dbReference>
<dbReference type="InterPro" id="IPR037518">
    <property type="entry name" value="MPN"/>
</dbReference>
<dbReference type="InterPro" id="IPR016563">
    <property type="entry name" value="Npl4"/>
</dbReference>
<dbReference type="InterPro" id="IPR007717">
    <property type="entry name" value="NPL4_C"/>
</dbReference>
<dbReference type="InterPro" id="IPR024682">
    <property type="entry name" value="Npl4_Ub-like_dom"/>
</dbReference>
<dbReference type="InterPro" id="IPR007716">
    <property type="entry name" value="NPL4_Zn-bd_put"/>
</dbReference>
<dbReference type="PANTHER" id="PTHR12710">
    <property type="entry name" value="NUCLEAR PROTEIN LOCALIZATION 4"/>
    <property type="match status" value="1"/>
</dbReference>
<dbReference type="PANTHER" id="PTHR12710:SF0">
    <property type="entry name" value="NUCLEAR PROTEIN LOCALIZATION PROTEIN 4 HOMOLOG"/>
    <property type="match status" value="1"/>
</dbReference>
<dbReference type="Pfam" id="PF05021">
    <property type="entry name" value="NPL4"/>
    <property type="match status" value="1"/>
</dbReference>
<dbReference type="Pfam" id="PF11543">
    <property type="entry name" value="UN_NPL4"/>
    <property type="match status" value="1"/>
</dbReference>
<dbReference type="Pfam" id="PF05020">
    <property type="entry name" value="zf-NPL4"/>
    <property type="match status" value="1"/>
</dbReference>
<dbReference type="PIRSF" id="PIRSF010052">
    <property type="entry name" value="Polyub_prc_Npl4"/>
    <property type="match status" value="1"/>
</dbReference>
<dbReference type="PROSITE" id="PS50249">
    <property type="entry name" value="MPN"/>
    <property type="match status" value="1"/>
</dbReference>
<evidence type="ECO:0000250" key="1"/>
<evidence type="ECO:0000255" key="2">
    <source>
        <dbReference type="PROSITE-ProRule" id="PRU01182"/>
    </source>
</evidence>
<evidence type="ECO:0000305" key="3"/>
<name>NPL4_EREGS</name>
<accession>Q74ZJ1</accession>
<organism>
    <name type="scientific">Eremothecium gossypii (strain ATCC 10895 / CBS 109.51 / FGSC 9923 / NRRL Y-1056)</name>
    <name type="common">Yeast</name>
    <name type="synonym">Ashbya gossypii</name>
    <dbReference type="NCBI Taxonomy" id="284811"/>
    <lineage>
        <taxon>Eukaryota</taxon>
        <taxon>Fungi</taxon>
        <taxon>Dikarya</taxon>
        <taxon>Ascomycota</taxon>
        <taxon>Saccharomycotina</taxon>
        <taxon>Saccharomycetes</taxon>
        <taxon>Saccharomycetales</taxon>
        <taxon>Saccharomycetaceae</taxon>
        <taxon>Eremothecium</taxon>
    </lineage>
</organism>
<feature type="chain" id="PRO_0000339432" description="Nuclear protein localization protein 4">
    <location>
        <begin position="1"/>
        <end position="563"/>
    </location>
</feature>
<feature type="domain" description="MPN" evidence="2">
    <location>
        <begin position="219"/>
        <end position="359"/>
    </location>
</feature>
<reference key="1">
    <citation type="journal article" date="2004" name="Science">
        <title>The Ashbya gossypii genome as a tool for mapping the ancient Saccharomyces cerevisiae genome.</title>
        <authorList>
            <person name="Dietrich F.S."/>
            <person name="Voegeli S."/>
            <person name="Brachat S."/>
            <person name="Lerch A."/>
            <person name="Gates K."/>
            <person name="Steiner S."/>
            <person name="Mohr C."/>
            <person name="Poehlmann R."/>
            <person name="Luedi P."/>
            <person name="Choi S."/>
            <person name="Wing R.A."/>
            <person name="Flavier A."/>
            <person name="Gaffney T.D."/>
            <person name="Philippsen P."/>
        </authorList>
    </citation>
    <scope>NUCLEOTIDE SEQUENCE [LARGE SCALE GENOMIC DNA]</scope>
    <source>
        <strain>ATCC 10895 / CBS 109.51 / FGSC 9923 / NRRL Y-1056</strain>
    </source>
</reference>
<reference key="2">
    <citation type="journal article" date="2013" name="G3 (Bethesda)">
        <title>Genomes of Ashbya fungi isolated from insects reveal four mating-type loci, numerous translocations, lack of transposons, and distinct gene duplications.</title>
        <authorList>
            <person name="Dietrich F.S."/>
            <person name="Voegeli S."/>
            <person name="Kuo S."/>
            <person name="Philippsen P."/>
        </authorList>
    </citation>
    <scope>GENOME REANNOTATION</scope>
    <source>
        <strain>ATCC 10895 / CBS 109.51 / FGSC 9923 / NRRL Y-1056</strain>
    </source>
</reference>
<proteinExistence type="inferred from homology"/>
<protein>
    <recommendedName>
        <fullName>Nuclear protein localization protein 4</fullName>
    </recommendedName>
</protein>
<sequence>MILRFRSKHGMQRVNCEGSEQFGTVLDRWVKLVHERAPREAMEVGVAERQIETRIAAEMAQKTVEQLGLKHGDMLSVSFKETGGSLAVAAAPERSSELAVDRELAREEGLIRRSHSRLCRHGDRGMCEYCSPLPPWDRGYQQEQNLKHISFHAHVKELNEHTNKKASGSTYIPPLSPPDFHVNKHCPAPHEPWPRGICSKCQPSAISLQQQEFRMVDHVEFQHSELVNEFINTWRSTGMQRFGYLYGRYARYDNTPLGIKAVVEAIWEPEQHDEQDGLTMDTVAVRVSVAAVDAIAADMGLMRLGMIFTDLTDSGSGDGSVFCKRHKDSFFLSSLEVITAARHQLHHRNACRFSDQGFYSSKFVTCVVSGNLQGEIDVAAYQVSTDAEALVDADIISGSTHPSMAYINEPSAERYVPEIFYMRRNEYGITIKENAKPAFPVDYLIVSLTHGFPVAADTPPTFQAHTGFPWANRQAMGQSQDYLELRRVLLPSIAAGDYTELHRRLSSFHLLLYLHSLQILDASEWRRLVTVATTPAPRGVEAVYDLISGPGWQTLVMILQEAA</sequence>
<keyword id="KW-0963">Cytoplasm</keyword>
<keyword id="KW-0256">Endoplasmic reticulum</keyword>
<keyword id="KW-0472">Membrane</keyword>
<keyword id="KW-0509">mRNA transport</keyword>
<keyword id="KW-0539">Nucleus</keyword>
<keyword id="KW-0653">Protein transport</keyword>
<keyword id="KW-1185">Reference proteome</keyword>
<keyword id="KW-0811">Translocation</keyword>
<keyword id="KW-0813">Transport</keyword>